<name>OPGH_ECO57</name>
<keyword id="KW-0997">Cell inner membrane</keyword>
<keyword id="KW-1003">Cell membrane</keyword>
<keyword id="KW-0328">Glycosyltransferase</keyword>
<keyword id="KW-0472">Membrane</keyword>
<keyword id="KW-1185">Reference proteome</keyword>
<keyword id="KW-0808">Transferase</keyword>
<keyword id="KW-0812">Transmembrane</keyword>
<keyword id="KW-1133">Transmembrane helix</keyword>
<accession>P62518</accession>
<accession>P33137</accession>
<accession>P77371</accession>
<dbReference type="EC" id="2.4.1.-"/>
<dbReference type="EMBL" id="AE005174">
    <property type="protein sequence ID" value="AAG55795.1"/>
    <property type="molecule type" value="Genomic_DNA"/>
</dbReference>
<dbReference type="EMBL" id="BA000007">
    <property type="protein sequence ID" value="BAB34850.1"/>
    <property type="status" value="ALT_INIT"/>
    <property type="molecule type" value="Genomic_DNA"/>
</dbReference>
<dbReference type="RefSeq" id="NP_309454.2">
    <property type="nucleotide sequence ID" value="NC_002695.1"/>
</dbReference>
<dbReference type="RefSeq" id="WP_001295445.1">
    <property type="nucleotide sequence ID" value="NZ_VOAI01000018.1"/>
</dbReference>
<dbReference type="STRING" id="155864.Z1684"/>
<dbReference type="GeneID" id="913619"/>
<dbReference type="GeneID" id="93776365"/>
<dbReference type="KEGG" id="ece:Z1684"/>
<dbReference type="KEGG" id="ecs:ECs_1427"/>
<dbReference type="PATRIC" id="fig|386585.9.peg.1529"/>
<dbReference type="eggNOG" id="COG2943">
    <property type="taxonomic scope" value="Bacteria"/>
</dbReference>
<dbReference type="HOGENOM" id="CLU_015730_0_0_6"/>
<dbReference type="OMA" id="HYWQLGE"/>
<dbReference type="UniPathway" id="UPA00637"/>
<dbReference type="Proteomes" id="UP000000558">
    <property type="component" value="Chromosome"/>
</dbReference>
<dbReference type="Proteomes" id="UP000002519">
    <property type="component" value="Chromosome"/>
</dbReference>
<dbReference type="GO" id="GO:0005886">
    <property type="term" value="C:plasma membrane"/>
    <property type="evidence" value="ECO:0007669"/>
    <property type="project" value="UniProtKB-SubCell"/>
</dbReference>
<dbReference type="GO" id="GO:0016758">
    <property type="term" value="F:hexosyltransferase activity"/>
    <property type="evidence" value="ECO:0007669"/>
    <property type="project" value="UniProtKB-UniRule"/>
</dbReference>
<dbReference type="GO" id="GO:0009250">
    <property type="term" value="P:glucan biosynthetic process"/>
    <property type="evidence" value="ECO:0007669"/>
    <property type="project" value="UniProtKB-UniRule"/>
</dbReference>
<dbReference type="CDD" id="cd04191">
    <property type="entry name" value="Glucan_BSP_MdoH"/>
    <property type="match status" value="1"/>
</dbReference>
<dbReference type="FunFam" id="3.90.550.10:FF:000047">
    <property type="entry name" value="Glucans biosynthesis glucosyltransferase H"/>
    <property type="match status" value="1"/>
</dbReference>
<dbReference type="Gene3D" id="3.90.550.10">
    <property type="entry name" value="Spore Coat Polysaccharide Biosynthesis Protein SpsA, Chain A"/>
    <property type="match status" value="1"/>
</dbReference>
<dbReference type="HAMAP" id="MF_01072">
    <property type="entry name" value="MdoH_OpgH"/>
    <property type="match status" value="1"/>
</dbReference>
<dbReference type="InterPro" id="IPR023725">
    <property type="entry name" value="Glucans_biosynth_gluTrFase_H"/>
</dbReference>
<dbReference type="InterPro" id="IPR001173">
    <property type="entry name" value="Glyco_trans_2-like"/>
</dbReference>
<dbReference type="InterPro" id="IPR050321">
    <property type="entry name" value="Glycosyltr_2/OpgH_subfam"/>
</dbReference>
<dbReference type="InterPro" id="IPR029044">
    <property type="entry name" value="Nucleotide-diphossugar_trans"/>
</dbReference>
<dbReference type="NCBIfam" id="NF003955">
    <property type="entry name" value="PRK05454.1-1"/>
    <property type="match status" value="1"/>
</dbReference>
<dbReference type="NCBIfam" id="NF003958">
    <property type="entry name" value="PRK05454.2-1"/>
    <property type="match status" value="1"/>
</dbReference>
<dbReference type="NCBIfam" id="NF003962">
    <property type="entry name" value="PRK05454.2-5"/>
    <property type="match status" value="1"/>
</dbReference>
<dbReference type="PANTHER" id="PTHR43867">
    <property type="entry name" value="CELLULOSE SYNTHASE CATALYTIC SUBUNIT A [UDP-FORMING]"/>
    <property type="match status" value="1"/>
</dbReference>
<dbReference type="PANTHER" id="PTHR43867:SF5">
    <property type="entry name" value="GLUCANS BIOSYNTHESIS GLUCOSYLTRANSFERASE H"/>
    <property type="match status" value="1"/>
</dbReference>
<dbReference type="Pfam" id="PF00535">
    <property type="entry name" value="Glycos_transf_2"/>
    <property type="match status" value="1"/>
</dbReference>
<dbReference type="SUPFAM" id="SSF53448">
    <property type="entry name" value="Nucleotide-diphospho-sugar transferases"/>
    <property type="match status" value="1"/>
</dbReference>
<sequence length="847" mass="96937">MNKTTEYIDAMPIAASEKAALPKTDIRAVHQALDAEHRTWAREDDSPQGSVKARLEQAWPDSLADGQLIKDDEGRDQLKAMPEAKRSSMFPDPWRTNPVGRFWDRLRGRDVTPRYLARLTKEEQESEQKWRTVGTIRRYILLILTLAQTVVATWYMKTILPYQGWALINPMDMVGQDLWVSFMQLLPYMLQTGILILFAVLFCWVSAGFWTALMGFLQLLIGRDKYSISASTVGDEPLNPEHRTALIMPICNEDVNRVFAGLRATWESVKATGNAKHFDVYILSDSYNPDICVAEQKAWMELIAEVGGEGQIFYRRRRRRVKRKSGNIDDFCRRWGSQYSYMVVLDADSVMTGDCLCGLVRLMEANPNAGIIQSSPKASGMDTLYARCQQFATRVYGPLFTAGLHFWQLGESHYWGHNAIIRVKPFIEHCALAPLPGEGSFAGSILSHDFVEAALMRRAGWGVWIAYDLPGSYEELPPNLLDELKRDRRWCHGNLMNFRLFLVKGMHPVHRAVFLTGVMSYLSAPLWFMFLALSTALQVVHALTEPQYFLQPRQLFPVWPQWRPELAIALFASTMVLLFLPKLLSILLIWCKGTKEYGGFWRVTLSLLLEVLFSVLLAPVRMLFHTVFVVSAFLGWEVVWNSPQRDDDSTSWGEAFKRHGSQLLLGLVWAVGMAWLDLRFLFWLAPIVFSLILSPFVSVISSRATVGLRTKRWKLFLIPEEYSPPQVLVDTDRFLEMNRQRSLDDGFMHAVFNPSFNALATAMATARHRASKVLEIARDRHVEQALNETPEKLNRDRRLVLLSDPVTMARLHFRVWNSPERYSSWVSYYEGIKLNPLALRKPDAASQ</sequence>
<gene>
    <name type="primary">mdoH</name>
    <name type="synonym">opgH</name>
    <name type="ordered locus">Z1684</name>
    <name type="ordered locus">ECs1427</name>
</gene>
<organism>
    <name type="scientific">Escherichia coli O157:H7</name>
    <dbReference type="NCBI Taxonomy" id="83334"/>
    <lineage>
        <taxon>Bacteria</taxon>
        <taxon>Pseudomonadati</taxon>
        <taxon>Pseudomonadota</taxon>
        <taxon>Gammaproteobacteria</taxon>
        <taxon>Enterobacterales</taxon>
        <taxon>Enterobacteriaceae</taxon>
        <taxon>Escherichia</taxon>
    </lineage>
</organism>
<protein>
    <recommendedName>
        <fullName>Glucans biosynthesis glucosyltransferase H</fullName>
        <ecNumber>2.4.1.-</ecNumber>
    </recommendedName>
</protein>
<evidence type="ECO:0000250" key="1"/>
<evidence type="ECO:0000255" key="2"/>
<evidence type="ECO:0000305" key="3"/>
<proteinExistence type="inferred from homology"/>
<comment type="function">
    <text evidence="1">Involved in the biosynthesis of osmoregulated periplasmic glucans (OPGs).</text>
</comment>
<comment type="pathway">
    <text>Glycan metabolism; osmoregulated periplasmic glucan (OPG) biosynthesis.</text>
</comment>
<comment type="subcellular location">
    <subcellularLocation>
        <location evidence="1">Cell inner membrane</location>
        <topology evidence="1">Multi-pass membrane protein</topology>
    </subcellularLocation>
</comment>
<comment type="similarity">
    <text evidence="3">Belongs to the glycosyltransferase 2 family. OpgH subfamily.</text>
</comment>
<comment type="sequence caution" evidence="3">
    <conflict type="erroneous initiation">
        <sequence resource="EMBL-CDS" id="BAB34850"/>
    </conflict>
</comment>
<feature type="chain" id="PRO_0000210350" description="Glucans biosynthesis glucosyltransferase H">
    <location>
        <begin position="1"/>
        <end position="847"/>
    </location>
</feature>
<feature type="topological domain" description="Cytoplasmic" evidence="2">
    <location>
        <begin position="1"/>
        <end position="139"/>
    </location>
</feature>
<feature type="transmembrane region" description="Helical" evidence="2">
    <location>
        <begin position="140"/>
        <end position="160"/>
    </location>
</feature>
<feature type="topological domain" description="Periplasmic" evidence="2">
    <location>
        <begin position="161"/>
        <end position="193"/>
    </location>
</feature>
<feature type="transmembrane region" description="Helical" evidence="2">
    <location>
        <begin position="194"/>
        <end position="214"/>
    </location>
</feature>
<feature type="topological domain" description="Cytoplasmic" evidence="2">
    <location>
        <begin position="215"/>
        <end position="512"/>
    </location>
</feature>
<feature type="transmembrane region" description="Helical" evidence="2">
    <location>
        <begin position="513"/>
        <end position="533"/>
    </location>
</feature>
<feature type="topological domain" description="Periplasmic" evidence="2">
    <location>
        <begin position="534"/>
        <end position="569"/>
    </location>
</feature>
<feature type="transmembrane region" description="Helical" evidence="2">
    <location>
        <begin position="570"/>
        <end position="590"/>
    </location>
</feature>
<feature type="topological domain" description="Cytoplasmic" evidence="2">
    <location>
        <begin position="591"/>
        <end position="602"/>
    </location>
</feature>
<feature type="transmembrane region" description="Helical" evidence="2">
    <location>
        <begin position="603"/>
        <end position="625"/>
    </location>
</feature>
<feature type="topological domain" description="Periplasmic" evidence="2">
    <location>
        <begin position="626"/>
        <end position="679"/>
    </location>
</feature>
<feature type="transmembrane region" description="Helical" evidence="2">
    <location>
        <begin position="680"/>
        <end position="700"/>
    </location>
</feature>
<feature type="topological domain" description="Cytoplasmic" evidence="2">
    <location>
        <begin position="701"/>
        <end position="847"/>
    </location>
</feature>
<reference key="1">
    <citation type="journal article" date="2001" name="Nature">
        <title>Genome sequence of enterohaemorrhagic Escherichia coli O157:H7.</title>
        <authorList>
            <person name="Perna N.T."/>
            <person name="Plunkett G. III"/>
            <person name="Burland V."/>
            <person name="Mau B."/>
            <person name="Glasner J.D."/>
            <person name="Rose D.J."/>
            <person name="Mayhew G.F."/>
            <person name="Evans P.S."/>
            <person name="Gregor J."/>
            <person name="Kirkpatrick H.A."/>
            <person name="Posfai G."/>
            <person name="Hackett J."/>
            <person name="Klink S."/>
            <person name="Boutin A."/>
            <person name="Shao Y."/>
            <person name="Miller L."/>
            <person name="Grotbeck E.J."/>
            <person name="Davis N.W."/>
            <person name="Lim A."/>
            <person name="Dimalanta E.T."/>
            <person name="Potamousis K."/>
            <person name="Apodaca J."/>
            <person name="Anantharaman T.S."/>
            <person name="Lin J."/>
            <person name="Yen G."/>
            <person name="Schwartz D.C."/>
            <person name="Welch R.A."/>
            <person name="Blattner F.R."/>
        </authorList>
    </citation>
    <scope>NUCLEOTIDE SEQUENCE [LARGE SCALE GENOMIC DNA]</scope>
    <source>
        <strain>O157:H7 / EDL933 / ATCC 700927 / EHEC</strain>
    </source>
</reference>
<reference key="2">
    <citation type="journal article" date="2001" name="DNA Res.">
        <title>Complete genome sequence of enterohemorrhagic Escherichia coli O157:H7 and genomic comparison with a laboratory strain K-12.</title>
        <authorList>
            <person name="Hayashi T."/>
            <person name="Makino K."/>
            <person name="Ohnishi M."/>
            <person name="Kurokawa K."/>
            <person name="Ishii K."/>
            <person name="Yokoyama K."/>
            <person name="Han C.-G."/>
            <person name="Ohtsubo E."/>
            <person name="Nakayama K."/>
            <person name="Murata T."/>
            <person name="Tanaka M."/>
            <person name="Tobe T."/>
            <person name="Iida T."/>
            <person name="Takami H."/>
            <person name="Honda T."/>
            <person name="Sasakawa C."/>
            <person name="Ogasawara N."/>
            <person name="Yasunaga T."/>
            <person name="Kuhara S."/>
            <person name="Shiba T."/>
            <person name="Hattori M."/>
            <person name="Shinagawa H."/>
        </authorList>
    </citation>
    <scope>NUCLEOTIDE SEQUENCE [LARGE SCALE GENOMIC DNA]</scope>
    <source>
        <strain>O157:H7 / Sakai / RIMD 0509952 / EHEC</strain>
    </source>
</reference>